<organism>
    <name type="scientific">Shigella flexneri</name>
    <dbReference type="NCBI Taxonomy" id="623"/>
    <lineage>
        <taxon>Bacteria</taxon>
        <taxon>Pseudomonadati</taxon>
        <taxon>Pseudomonadota</taxon>
        <taxon>Gammaproteobacteria</taxon>
        <taxon>Enterobacterales</taxon>
        <taxon>Enterobacteriaceae</taxon>
        <taxon>Shigella</taxon>
    </lineage>
</organism>
<name>STPA_SHIFL</name>
<feature type="chain" id="PRO_0000168517" description="DNA-binding protein StpA">
    <location>
        <begin position="1"/>
        <end position="134"/>
    </location>
</feature>
<feature type="DNA-binding region" evidence="1">
    <location>
        <begin position="112"/>
        <end position="117"/>
    </location>
</feature>
<feature type="region of interest" description="Disordered" evidence="3">
    <location>
        <begin position="73"/>
        <end position="94"/>
    </location>
</feature>
<gene>
    <name type="primary">stpA</name>
    <name type="ordered locus">SF2697</name>
    <name type="ordered locus">S2883</name>
</gene>
<comment type="function">
    <text evidence="2">A DNA-binding protein that acts in a fashion similar to H-NS, repressing gene transcription. A subset of H-NS/StpA-regulated genes require auxillary proteins for repression; these auxillary proteins (Hha and other similar proteins) may also modulate oligomerization of the H-NS/StpA complex (By similarity).</text>
</comment>
<comment type="subunit">
    <text evidence="2">Forms homodimers, can interact with H-NS. May interact with Hha and/or Cnu.</text>
</comment>
<comment type="interaction">
    <interactant intactId="EBI-2011670">
        <id>P0ACG3</id>
    </interactant>
    <interactant intactId="EBI-2011670">
        <id>P0ACG3</id>
        <label>stpA</label>
    </interactant>
    <organismsDiffer>false</organismsDiffer>
    <experiments>2</experiments>
</comment>
<comment type="subcellular location">
    <subcellularLocation>
        <location evidence="2">Cytoplasm</location>
        <location evidence="2">Nucleoid</location>
    </subcellularLocation>
</comment>
<comment type="similarity">
    <text evidence="4">Belongs to the histone-like protein H-NS family.</text>
</comment>
<reference key="1">
    <citation type="journal article" date="2002" name="Nucleic Acids Res.">
        <title>Genome sequence of Shigella flexneri 2a: insights into pathogenicity through comparison with genomes of Escherichia coli K12 and O157.</title>
        <authorList>
            <person name="Jin Q."/>
            <person name="Yuan Z."/>
            <person name="Xu J."/>
            <person name="Wang Y."/>
            <person name="Shen Y."/>
            <person name="Lu W."/>
            <person name="Wang J."/>
            <person name="Liu H."/>
            <person name="Yang J."/>
            <person name="Yang F."/>
            <person name="Zhang X."/>
            <person name="Zhang J."/>
            <person name="Yang G."/>
            <person name="Wu H."/>
            <person name="Qu D."/>
            <person name="Dong J."/>
            <person name="Sun L."/>
            <person name="Xue Y."/>
            <person name="Zhao A."/>
            <person name="Gao Y."/>
            <person name="Zhu J."/>
            <person name="Kan B."/>
            <person name="Ding K."/>
            <person name="Chen S."/>
            <person name="Cheng H."/>
            <person name="Yao Z."/>
            <person name="He B."/>
            <person name="Chen R."/>
            <person name="Ma D."/>
            <person name="Qiang B."/>
            <person name="Wen Y."/>
            <person name="Hou Y."/>
            <person name="Yu J."/>
        </authorList>
    </citation>
    <scope>NUCLEOTIDE SEQUENCE [LARGE SCALE GENOMIC DNA]</scope>
    <source>
        <strain>301 / Serotype 2a</strain>
    </source>
</reference>
<reference key="2">
    <citation type="journal article" date="2003" name="Infect. Immun.">
        <title>Complete genome sequence and comparative genomics of Shigella flexneri serotype 2a strain 2457T.</title>
        <authorList>
            <person name="Wei J."/>
            <person name="Goldberg M.B."/>
            <person name="Burland V."/>
            <person name="Venkatesan M.M."/>
            <person name="Deng W."/>
            <person name="Fournier G."/>
            <person name="Mayhew G.F."/>
            <person name="Plunkett G. III"/>
            <person name="Rose D.J."/>
            <person name="Darling A."/>
            <person name="Mau B."/>
            <person name="Perna N.T."/>
            <person name="Payne S.M."/>
            <person name="Runyen-Janecky L.J."/>
            <person name="Zhou S."/>
            <person name="Schwartz D.C."/>
            <person name="Blattner F.R."/>
        </authorList>
    </citation>
    <scope>NUCLEOTIDE SEQUENCE [LARGE SCALE GENOMIC DNA]</scope>
    <source>
        <strain>ATCC 700930 / 2457T / Serotype 2a</strain>
    </source>
</reference>
<evidence type="ECO:0000250" key="1">
    <source>
        <dbReference type="UniProtKB" id="P0A1S2"/>
    </source>
</evidence>
<evidence type="ECO:0000250" key="2">
    <source>
        <dbReference type="UniProtKB" id="P0ACG1"/>
    </source>
</evidence>
<evidence type="ECO:0000256" key="3">
    <source>
        <dbReference type="SAM" id="MobiDB-lite"/>
    </source>
</evidence>
<evidence type="ECO:0000305" key="4"/>
<sequence length="134" mass="15348">MSVMLQSLNNIRTLRAMAREFSIDVLEEMLEKFRVVTKERREEEEQQQRELAERQEKISTWLELMKADGINPEELLGNSSAAAPRAGKKRQPRPAKYKFTDVNGETKTWTGQGRTPKPIAQALAEGKSLDDFLI</sequence>
<protein>
    <recommendedName>
        <fullName>DNA-binding protein StpA</fullName>
    </recommendedName>
    <alternativeName>
        <fullName>H-NS homolog StpA</fullName>
    </alternativeName>
</protein>
<accession>P0ACG3</accession>
<accession>P30017</accession>
<proteinExistence type="evidence at protein level"/>
<dbReference type="EMBL" id="AE005674">
    <property type="protein sequence ID" value="AAN44190.1"/>
    <property type="molecule type" value="Genomic_DNA"/>
</dbReference>
<dbReference type="EMBL" id="AE014073">
    <property type="protein sequence ID" value="AAP18018.1"/>
    <property type="molecule type" value="Genomic_DNA"/>
</dbReference>
<dbReference type="RefSeq" id="NP_708483.1">
    <property type="nucleotide sequence ID" value="NC_004337.2"/>
</dbReference>
<dbReference type="RefSeq" id="WP_000115383.1">
    <property type="nucleotide sequence ID" value="NZ_WPGW01000014.1"/>
</dbReference>
<dbReference type="BMRB" id="P0ACG3"/>
<dbReference type="SMR" id="P0ACG3"/>
<dbReference type="IntAct" id="P0ACG3">
    <property type="interactions" value="2"/>
</dbReference>
<dbReference type="STRING" id="198214.SF2697"/>
<dbReference type="PaxDb" id="198214-SF2697"/>
<dbReference type="GeneID" id="1027464"/>
<dbReference type="GeneID" id="93779342"/>
<dbReference type="KEGG" id="sfl:SF2697"/>
<dbReference type="KEGG" id="sfx:S2883"/>
<dbReference type="PATRIC" id="fig|198214.7.peg.3212"/>
<dbReference type="HOGENOM" id="CLU_117503_0_0_6"/>
<dbReference type="Proteomes" id="UP000001006">
    <property type="component" value="Chromosome"/>
</dbReference>
<dbReference type="Proteomes" id="UP000002673">
    <property type="component" value="Chromosome"/>
</dbReference>
<dbReference type="GO" id="GO:0005829">
    <property type="term" value="C:cytosol"/>
    <property type="evidence" value="ECO:0007669"/>
    <property type="project" value="TreeGrafter"/>
</dbReference>
<dbReference type="GO" id="GO:0009295">
    <property type="term" value="C:nucleoid"/>
    <property type="evidence" value="ECO:0007669"/>
    <property type="project" value="UniProtKB-SubCell"/>
</dbReference>
<dbReference type="GO" id="GO:0032993">
    <property type="term" value="C:protein-DNA complex"/>
    <property type="evidence" value="ECO:0007669"/>
    <property type="project" value="TreeGrafter"/>
</dbReference>
<dbReference type="GO" id="GO:0003681">
    <property type="term" value="F:bent DNA binding"/>
    <property type="evidence" value="ECO:0007669"/>
    <property type="project" value="TreeGrafter"/>
</dbReference>
<dbReference type="GO" id="GO:0001217">
    <property type="term" value="F:DNA-binding transcription repressor activity"/>
    <property type="evidence" value="ECO:0007669"/>
    <property type="project" value="TreeGrafter"/>
</dbReference>
<dbReference type="GO" id="GO:0042802">
    <property type="term" value="F:identical protein binding"/>
    <property type="evidence" value="ECO:0000353"/>
    <property type="project" value="IntAct"/>
</dbReference>
<dbReference type="GO" id="GO:0003680">
    <property type="term" value="F:minor groove of adenine-thymine-rich DNA binding"/>
    <property type="evidence" value="ECO:0007669"/>
    <property type="project" value="TreeGrafter"/>
</dbReference>
<dbReference type="GO" id="GO:0046983">
    <property type="term" value="F:protein dimerization activity"/>
    <property type="evidence" value="ECO:0007669"/>
    <property type="project" value="InterPro"/>
</dbReference>
<dbReference type="GO" id="GO:0030527">
    <property type="term" value="F:structural constituent of chromatin"/>
    <property type="evidence" value="ECO:0007669"/>
    <property type="project" value="InterPro"/>
</dbReference>
<dbReference type="GO" id="GO:0000976">
    <property type="term" value="F:transcription cis-regulatory region binding"/>
    <property type="evidence" value="ECO:0007669"/>
    <property type="project" value="TreeGrafter"/>
</dbReference>
<dbReference type="FunFam" id="1.10.287.1050:FF:000001">
    <property type="entry name" value="DNA-binding protein"/>
    <property type="match status" value="1"/>
</dbReference>
<dbReference type="FunFam" id="4.10.430.10:FF:000001">
    <property type="entry name" value="DNA-binding protein"/>
    <property type="match status" value="1"/>
</dbReference>
<dbReference type="Gene3D" id="1.10.287.1050">
    <property type="entry name" value="H-NS histone-like proteins"/>
    <property type="match status" value="1"/>
</dbReference>
<dbReference type="Gene3D" id="4.10.430.10">
    <property type="entry name" value="Histone-like protein H-NS, C-terminal domain"/>
    <property type="match status" value="1"/>
</dbReference>
<dbReference type="InterPro" id="IPR054180">
    <property type="entry name" value="H-NS-like_N"/>
</dbReference>
<dbReference type="InterPro" id="IPR027444">
    <property type="entry name" value="H-NS_C_dom"/>
</dbReference>
<dbReference type="InterPro" id="IPR037150">
    <property type="entry name" value="H-NS_C_dom_sf"/>
</dbReference>
<dbReference type="InterPro" id="IPR001801">
    <property type="entry name" value="Histone_HNS"/>
</dbReference>
<dbReference type="InterPro" id="IPR027454">
    <property type="entry name" value="Histone_HNS_N"/>
</dbReference>
<dbReference type="NCBIfam" id="NF007656">
    <property type="entry name" value="PRK10328.1"/>
    <property type="match status" value="1"/>
</dbReference>
<dbReference type="PANTHER" id="PTHR38097">
    <property type="match status" value="1"/>
</dbReference>
<dbReference type="PANTHER" id="PTHR38097:SF2">
    <property type="entry name" value="DNA-BINDING PROTEIN STPA"/>
    <property type="match status" value="1"/>
</dbReference>
<dbReference type="Pfam" id="PF00816">
    <property type="entry name" value="Histone_HNS"/>
    <property type="match status" value="1"/>
</dbReference>
<dbReference type="Pfam" id="PF22470">
    <property type="entry name" value="Histone_HNS_N"/>
    <property type="match status" value="1"/>
</dbReference>
<dbReference type="PIRSF" id="PIRSF002096">
    <property type="entry name" value="HnS"/>
    <property type="match status" value="1"/>
</dbReference>
<dbReference type="SMART" id="SM00528">
    <property type="entry name" value="HNS"/>
    <property type="match status" value="1"/>
</dbReference>
<dbReference type="SUPFAM" id="SSF81273">
    <property type="entry name" value="H-NS histone-like proteins"/>
    <property type="match status" value="2"/>
</dbReference>
<keyword id="KW-0963">Cytoplasm</keyword>
<keyword id="KW-0238">DNA-binding</keyword>
<keyword id="KW-1185">Reference proteome</keyword>